<evidence type="ECO:0000255" key="1">
    <source>
        <dbReference type="HAMAP-Rule" id="MF_00611"/>
    </source>
</evidence>
<sequence>MSHTAEIPLVPGSESPLELKPLKAADPHVVYHRRAHRLLSLAKDSPLADYFELCRRLVSIQAKLAEEADFGQLLAWGKDEATPLSLLGSEADSYWQGLLQQLLSDLLPQVDESIARVVRLLMQQSPEQLSSWGRSLRQGHVSEVPAHFSLFIWAAMGVYWSHWAPMVIKRMDQRKVAQQSMCPVCGCHPVASVIVDQPRAGLRYLHCSLCESEWHYIRAHCTSCGQDKEMTIWSLDDAQAQVRIESCDECHGYTKMMFVEMSPSMDVVADDLATLMLDSELNAKGFGATTLNPLLMAHEIT</sequence>
<proteinExistence type="inferred from homology"/>
<reference key="1">
    <citation type="submission" date="2008-12" db="EMBL/GenBank/DDBJ databases">
        <title>Complete sequence of chromosome of Shewanella baltica OS223.</title>
        <authorList>
            <consortium name="US DOE Joint Genome Institute"/>
            <person name="Lucas S."/>
            <person name="Copeland A."/>
            <person name="Lapidus A."/>
            <person name="Glavina del Rio T."/>
            <person name="Dalin E."/>
            <person name="Tice H."/>
            <person name="Bruce D."/>
            <person name="Goodwin L."/>
            <person name="Pitluck S."/>
            <person name="Chertkov O."/>
            <person name="Meincke L."/>
            <person name="Brettin T."/>
            <person name="Detter J.C."/>
            <person name="Han C."/>
            <person name="Kuske C.R."/>
            <person name="Larimer F."/>
            <person name="Land M."/>
            <person name="Hauser L."/>
            <person name="Kyrpides N."/>
            <person name="Ovchinnikova G."/>
            <person name="Brettar I."/>
            <person name="Rodrigues J."/>
            <person name="Konstantinidis K."/>
            <person name="Tiedje J."/>
        </authorList>
    </citation>
    <scope>NUCLEOTIDE SEQUENCE [LARGE SCALE GENOMIC DNA]</scope>
    <source>
        <strain>OS223</strain>
    </source>
</reference>
<name>FDHE_SHEB2</name>
<comment type="function">
    <text evidence="1">Necessary for formate dehydrogenase activity.</text>
</comment>
<comment type="subcellular location">
    <subcellularLocation>
        <location evidence="1">Cytoplasm</location>
    </subcellularLocation>
</comment>
<comment type="similarity">
    <text evidence="1">Belongs to the FdhE family.</text>
</comment>
<gene>
    <name evidence="1" type="primary">fdhE</name>
    <name type="ordered locus">Sbal223_0107</name>
</gene>
<keyword id="KW-0963">Cytoplasm</keyword>
<accession>B8E3M2</accession>
<feature type="chain" id="PRO_1000147172" description="Protein FdhE homolog">
    <location>
        <begin position="1"/>
        <end position="301"/>
    </location>
</feature>
<dbReference type="EMBL" id="CP001252">
    <property type="protein sequence ID" value="ACK44648.1"/>
    <property type="molecule type" value="Genomic_DNA"/>
</dbReference>
<dbReference type="RefSeq" id="WP_012586400.1">
    <property type="nucleotide sequence ID" value="NC_011663.1"/>
</dbReference>
<dbReference type="SMR" id="B8E3M2"/>
<dbReference type="KEGG" id="sbp:Sbal223_0107"/>
<dbReference type="HOGENOM" id="CLU_055275_0_0_6"/>
<dbReference type="Proteomes" id="UP000002507">
    <property type="component" value="Chromosome"/>
</dbReference>
<dbReference type="GO" id="GO:0005829">
    <property type="term" value="C:cytosol"/>
    <property type="evidence" value="ECO:0007669"/>
    <property type="project" value="TreeGrafter"/>
</dbReference>
<dbReference type="GO" id="GO:0008199">
    <property type="term" value="F:ferric iron binding"/>
    <property type="evidence" value="ECO:0007669"/>
    <property type="project" value="TreeGrafter"/>
</dbReference>
<dbReference type="GO" id="GO:0051604">
    <property type="term" value="P:protein maturation"/>
    <property type="evidence" value="ECO:0007669"/>
    <property type="project" value="TreeGrafter"/>
</dbReference>
<dbReference type="CDD" id="cd16341">
    <property type="entry name" value="FdhE"/>
    <property type="match status" value="1"/>
</dbReference>
<dbReference type="Gene3D" id="3.90.1670.10">
    <property type="entry name" value="FdhE-like domain"/>
    <property type="match status" value="1"/>
</dbReference>
<dbReference type="HAMAP" id="MF_00611">
    <property type="entry name" value="FdeH"/>
    <property type="match status" value="1"/>
</dbReference>
<dbReference type="InterPro" id="IPR024064">
    <property type="entry name" value="FdhE-like_sf"/>
</dbReference>
<dbReference type="InterPro" id="IPR056796">
    <property type="entry name" value="FdhE_C"/>
</dbReference>
<dbReference type="InterPro" id="IPR056797">
    <property type="entry name" value="FdhE_central"/>
</dbReference>
<dbReference type="InterPro" id="IPR056774">
    <property type="entry name" value="FdhE_N"/>
</dbReference>
<dbReference type="InterPro" id="IPR006452">
    <property type="entry name" value="Formate_DH_accessory"/>
</dbReference>
<dbReference type="NCBIfam" id="TIGR01562">
    <property type="entry name" value="FdhE"/>
    <property type="match status" value="1"/>
</dbReference>
<dbReference type="PANTHER" id="PTHR37689">
    <property type="entry name" value="PROTEIN FDHE"/>
    <property type="match status" value="1"/>
</dbReference>
<dbReference type="PANTHER" id="PTHR37689:SF1">
    <property type="entry name" value="PROTEIN FDHE"/>
    <property type="match status" value="1"/>
</dbReference>
<dbReference type="Pfam" id="PF24860">
    <property type="entry name" value="FdhE_C"/>
    <property type="match status" value="1"/>
</dbReference>
<dbReference type="Pfam" id="PF24859">
    <property type="entry name" value="FdhE_central"/>
    <property type="match status" value="1"/>
</dbReference>
<dbReference type="Pfam" id="PF04216">
    <property type="entry name" value="FdhE_N"/>
    <property type="match status" value="1"/>
</dbReference>
<dbReference type="PIRSF" id="PIRSF018296">
    <property type="entry name" value="Format_dh_formtn"/>
    <property type="match status" value="1"/>
</dbReference>
<dbReference type="SUPFAM" id="SSF144020">
    <property type="entry name" value="FdhE-like"/>
    <property type="match status" value="1"/>
</dbReference>
<organism>
    <name type="scientific">Shewanella baltica (strain OS223)</name>
    <dbReference type="NCBI Taxonomy" id="407976"/>
    <lineage>
        <taxon>Bacteria</taxon>
        <taxon>Pseudomonadati</taxon>
        <taxon>Pseudomonadota</taxon>
        <taxon>Gammaproteobacteria</taxon>
        <taxon>Alteromonadales</taxon>
        <taxon>Shewanellaceae</taxon>
        <taxon>Shewanella</taxon>
    </lineage>
</organism>
<protein>
    <recommendedName>
        <fullName evidence="1">Protein FdhE homolog</fullName>
    </recommendedName>
</protein>